<sequence length="109" mass="12575">MASIIFSAKDIFEQEFGREVRGYNKVEVDEFLDDVIKDYETYAALVKSLRQEIADLKEELTRKPKPSPVQAEPLEAAITSSMTNFDILKRLNRLEKEVFGKQILDNSDF</sequence>
<proteinExistence type="inferred from homology"/>
<evidence type="ECO:0000255" key="1">
    <source>
        <dbReference type="HAMAP-Rule" id="MF_02011"/>
    </source>
</evidence>
<organism>
    <name type="scientific">Streptococcus pneumoniae (strain P1031)</name>
    <dbReference type="NCBI Taxonomy" id="488223"/>
    <lineage>
        <taxon>Bacteria</taxon>
        <taxon>Bacillati</taxon>
        <taxon>Bacillota</taxon>
        <taxon>Bacilli</taxon>
        <taxon>Lactobacillales</taxon>
        <taxon>Streptococcaceae</taxon>
        <taxon>Streptococcus</taxon>
    </lineage>
</organism>
<dbReference type="EMBL" id="CP000920">
    <property type="protein sequence ID" value="ACO22085.1"/>
    <property type="molecule type" value="Genomic_DNA"/>
</dbReference>
<dbReference type="RefSeq" id="WP_000146522.1">
    <property type="nucleotide sequence ID" value="NC_012467.1"/>
</dbReference>
<dbReference type="SMR" id="C1CIN3"/>
<dbReference type="GeneID" id="45652165"/>
<dbReference type="KEGG" id="spp:SPP_0410"/>
<dbReference type="HOGENOM" id="CLU_140309_1_0_9"/>
<dbReference type="GO" id="GO:0005737">
    <property type="term" value="C:cytoplasm"/>
    <property type="evidence" value="ECO:0007669"/>
    <property type="project" value="UniProtKB-SubCell"/>
</dbReference>
<dbReference type="GO" id="GO:0051301">
    <property type="term" value="P:cell division"/>
    <property type="evidence" value="ECO:0007669"/>
    <property type="project" value="UniProtKB-UniRule"/>
</dbReference>
<dbReference type="GO" id="GO:0008360">
    <property type="term" value="P:regulation of cell shape"/>
    <property type="evidence" value="ECO:0007669"/>
    <property type="project" value="UniProtKB-UniRule"/>
</dbReference>
<dbReference type="Gene3D" id="6.10.250.660">
    <property type="match status" value="1"/>
</dbReference>
<dbReference type="HAMAP" id="MF_02011">
    <property type="entry name" value="GpsB"/>
    <property type="match status" value="1"/>
</dbReference>
<dbReference type="InterPro" id="IPR011229">
    <property type="entry name" value="Cell_cycle_GpsB"/>
</dbReference>
<dbReference type="InterPro" id="IPR019933">
    <property type="entry name" value="DivIVA_domain"/>
</dbReference>
<dbReference type="InterPro" id="IPR007793">
    <property type="entry name" value="DivIVA_fam"/>
</dbReference>
<dbReference type="NCBIfam" id="TIGR03544">
    <property type="entry name" value="DivI1A_domain"/>
    <property type="match status" value="1"/>
</dbReference>
<dbReference type="NCBIfam" id="NF010725">
    <property type="entry name" value="PRK14127.1"/>
    <property type="match status" value="1"/>
</dbReference>
<dbReference type="PANTHER" id="PTHR35794:SF1">
    <property type="entry name" value="CELL CYCLE PROTEIN GPSB"/>
    <property type="match status" value="1"/>
</dbReference>
<dbReference type="PANTHER" id="PTHR35794">
    <property type="entry name" value="CELL DIVISION PROTEIN DIVIVA"/>
    <property type="match status" value="1"/>
</dbReference>
<dbReference type="Pfam" id="PF05103">
    <property type="entry name" value="DivIVA"/>
    <property type="match status" value="1"/>
</dbReference>
<dbReference type="PIRSF" id="PIRSF029938">
    <property type="entry name" value="UCP029938"/>
    <property type="match status" value="1"/>
</dbReference>
<protein>
    <recommendedName>
        <fullName evidence="1">Cell cycle protein GpsB</fullName>
    </recommendedName>
    <alternativeName>
        <fullName evidence="1">Guiding PBP1-shuttling protein</fullName>
    </alternativeName>
</protein>
<keyword id="KW-0131">Cell cycle</keyword>
<keyword id="KW-0132">Cell division</keyword>
<keyword id="KW-0133">Cell shape</keyword>
<keyword id="KW-0175">Coiled coil</keyword>
<keyword id="KW-0963">Cytoplasm</keyword>
<gene>
    <name evidence="1" type="primary">gpsB</name>
    <name type="ordered locus">SPP_0410</name>
</gene>
<feature type="chain" id="PRO_1000189504" description="Cell cycle protein GpsB">
    <location>
        <begin position="1"/>
        <end position="109"/>
    </location>
</feature>
<feature type="coiled-coil region" evidence="1">
    <location>
        <begin position="36"/>
        <end position="63"/>
    </location>
</feature>
<name>GPSB_STRZP</name>
<comment type="function">
    <text evidence="1">Divisome component that associates with the complex late in its assembly, after the Z-ring is formed, and is dependent on DivIC and PBP2B for its recruitment to the divisome. Together with EzrA, is a key component of the system that regulates PBP1 localization during cell cycle progression. Its main role could be the removal of PBP1 from the cell pole after pole maturation is completed. Also contributes to the recruitment of PBP1 to the division complex. Not essential for septum formation.</text>
</comment>
<comment type="subunit">
    <text evidence="1">Forms polymers through the coiled coil domains. Interacts with PBP1, MreC and EzrA.</text>
</comment>
<comment type="subcellular location">
    <subcellularLocation>
        <location evidence="1">Cytoplasm</location>
    </subcellularLocation>
    <text evidence="1">Shuttles between the lateral wall and the division site in a cell cycle-dependent manner.</text>
</comment>
<comment type="similarity">
    <text evidence="1">Belongs to the GpsB family.</text>
</comment>
<reference key="1">
    <citation type="journal article" date="2010" name="Genome Biol.">
        <title>Structure and dynamics of the pan-genome of Streptococcus pneumoniae and closely related species.</title>
        <authorList>
            <person name="Donati C."/>
            <person name="Hiller N.L."/>
            <person name="Tettelin H."/>
            <person name="Muzzi A."/>
            <person name="Croucher N.J."/>
            <person name="Angiuoli S.V."/>
            <person name="Oggioni M."/>
            <person name="Dunning Hotopp J.C."/>
            <person name="Hu F.Z."/>
            <person name="Riley D.R."/>
            <person name="Covacci A."/>
            <person name="Mitchell T.J."/>
            <person name="Bentley S.D."/>
            <person name="Kilian M."/>
            <person name="Ehrlich G.D."/>
            <person name="Rappuoli R."/>
            <person name="Moxon E.R."/>
            <person name="Masignani V."/>
        </authorList>
    </citation>
    <scope>NUCLEOTIDE SEQUENCE [LARGE SCALE GENOMIC DNA]</scope>
    <source>
        <strain>P1031</strain>
    </source>
</reference>
<accession>C1CIN3</accession>